<organism>
    <name type="scientific">Vitis vinifera</name>
    <name type="common">Grape</name>
    <dbReference type="NCBI Taxonomy" id="29760"/>
    <lineage>
        <taxon>Eukaryota</taxon>
        <taxon>Viridiplantae</taxon>
        <taxon>Streptophyta</taxon>
        <taxon>Embryophyta</taxon>
        <taxon>Tracheophyta</taxon>
        <taxon>Spermatophyta</taxon>
        <taxon>Magnoliopsida</taxon>
        <taxon>eudicotyledons</taxon>
        <taxon>Gunneridae</taxon>
        <taxon>Pentapetalae</taxon>
        <taxon>rosids</taxon>
        <taxon>Vitales</taxon>
        <taxon>Vitaceae</taxon>
        <taxon>Viteae</taxon>
        <taxon>Vitis</taxon>
    </lineage>
</organism>
<feature type="chain" id="PRO_0000313087" description="Stilbene synthase 4">
    <location>
        <begin position="1"/>
        <end position="392"/>
    </location>
</feature>
<feature type="active site" evidence="2">
    <location>
        <position position="164"/>
    </location>
</feature>
<feature type="binding site" evidence="1">
    <location>
        <begin position="55"/>
        <end position="58"/>
    </location>
    <ligand>
        <name>substrate</name>
    </ligand>
</feature>
<feature type="binding site" evidence="1">
    <location>
        <position position="267"/>
    </location>
    <ligand>
        <name>substrate</name>
    </ligand>
</feature>
<feature type="binding site" evidence="1">
    <location>
        <begin position="305"/>
        <end position="307"/>
    </location>
    <ligand>
        <name>substrate</name>
    </ligand>
</feature>
<keyword id="KW-0012">Acyltransferase</keyword>
<keyword id="KW-0963">Cytoplasm</keyword>
<keyword id="KW-0611">Plant defense</keyword>
<keyword id="KW-0346">Stress response</keyword>
<keyword id="KW-0808">Transferase</keyword>
<reference key="1">
    <citation type="journal article" date="2007" name="Nature">
        <title>The grapevine genome sequence suggests ancestral hexaploidization in major angiosperm phyla.</title>
        <authorList>
            <person name="Jaillon O."/>
            <person name="Aury J.-M."/>
            <person name="Noel B."/>
            <person name="Policriti A."/>
            <person name="Clepet C."/>
            <person name="Casagrande A."/>
            <person name="Choisne N."/>
            <person name="Aubourg S."/>
            <person name="Vitulo N."/>
            <person name="Jubin C."/>
            <person name="Vezzi A."/>
            <person name="Legeai F."/>
            <person name="Hugueney P."/>
            <person name="Dasilva C."/>
            <person name="Horner D."/>
            <person name="Mica E."/>
            <person name="Jublot D."/>
            <person name="Poulain J."/>
            <person name="Bruyere C."/>
            <person name="Billault A."/>
            <person name="Segurens B."/>
            <person name="Gouyvenoux M."/>
            <person name="Ugarte E."/>
            <person name="Cattonaro F."/>
            <person name="Anthouard V."/>
            <person name="Vico V."/>
            <person name="Del Fabbro C."/>
            <person name="Alaux M."/>
            <person name="Di Gaspero G."/>
            <person name="Dumas V."/>
            <person name="Felice N."/>
            <person name="Paillard S."/>
            <person name="Juman I."/>
            <person name="Moroldo M."/>
            <person name="Scalabrin S."/>
            <person name="Canaguier A."/>
            <person name="Le Clainche I."/>
            <person name="Malacrida G."/>
            <person name="Durand E."/>
            <person name="Pesole G."/>
            <person name="Laucou V."/>
            <person name="Chatelet P."/>
            <person name="Merdinoglu D."/>
            <person name="Delledonne M."/>
            <person name="Pezzotti M."/>
            <person name="Lecharny A."/>
            <person name="Scarpelli C."/>
            <person name="Artiguenave F."/>
            <person name="Pe M.E."/>
            <person name="Valle G."/>
            <person name="Morgante M."/>
            <person name="Caboche M."/>
            <person name="Adam-Blondon A.-F."/>
            <person name="Weissenbach J."/>
            <person name="Quetier F."/>
            <person name="Wincker P."/>
        </authorList>
    </citation>
    <scope>NUCLEOTIDE SEQUENCE [LARGE SCALE GENOMIC DNA]</scope>
    <source>
        <strain>cv. Pinot noir / PN40024</strain>
    </source>
</reference>
<reference key="2">
    <citation type="journal article" date="2007" name="PLoS ONE">
        <title>A high quality draft consensus sequence of the genome of a heterozygous grapevine variety.</title>
        <authorList>
            <person name="Velasco R."/>
            <person name="Zharkikh A."/>
            <person name="Troggio M."/>
            <person name="Cartwright D.A."/>
            <person name="Cestaro A."/>
            <person name="Pruss D."/>
            <person name="Pindo M."/>
            <person name="FitzGerald L.M."/>
            <person name="Vezzulli S."/>
            <person name="Reid J."/>
            <person name="Malacarne G."/>
            <person name="Iliev D."/>
            <person name="Coppola G."/>
            <person name="Wardell B."/>
            <person name="Micheletti D."/>
            <person name="Macalma T."/>
            <person name="Facci M."/>
            <person name="Mitchell J.T."/>
            <person name="Perazzolli M."/>
            <person name="Eldredge G."/>
            <person name="Gatto P."/>
            <person name="Oyzerski R."/>
            <person name="Moretto M."/>
            <person name="Gutin N."/>
            <person name="Stefanini M."/>
            <person name="Chen Y."/>
            <person name="Segala C."/>
            <person name="Davenport C."/>
            <person name="Dematte L."/>
            <person name="Mraz A."/>
            <person name="Battilana J."/>
            <person name="Stormo K."/>
            <person name="Costa F."/>
            <person name="Tao Q."/>
            <person name="Si-Ammour A."/>
            <person name="Harkins T."/>
            <person name="Lackey A."/>
            <person name="Perbost C."/>
            <person name="Taillon B."/>
            <person name="Stella A."/>
            <person name="Solovyev V."/>
            <person name="Fawcett J.A."/>
            <person name="Sterck L."/>
            <person name="Vandepoele K."/>
            <person name="Grando S.M."/>
            <person name="Toppo S."/>
            <person name="Moser C."/>
            <person name="Lanchbury J."/>
            <person name="Bogden R."/>
            <person name="Skolnick M."/>
            <person name="Sgaramella V."/>
            <person name="Bhatnagar S.K."/>
            <person name="Fontana P."/>
            <person name="Gutin A."/>
            <person name="Van de Peer Y."/>
            <person name="Salamini F."/>
            <person name="Viola R."/>
        </authorList>
    </citation>
    <scope>NUCLEOTIDE SEQUENCE [LARGE SCALE GENOMIC DNA]</scope>
    <source>
        <strain>cv. Pinot noir</strain>
    </source>
</reference>
<dbReference type="EC" id="2.3.1.95"/>
<dbReference type="EMBL" id="AM424663">
    <property type="protein sequence ID" value="CAN82080.1"/>
    <property type="molecule type" value="Genomic_DNA"/>
</dbReference>
<dbReference type="RefSeq" id="XP_003634073.1">
    <property type="nucleotide sequence ID" value="XM_003634025.3"/>
</dbReference>
<dbReference type="SMR" id="A5AEM3"/>
<dbReference type="PaxDb" id="29760-VIT_16s0100g00900.t01"/>
<dbReference type="KEGG" id="vvi:100853675"/>
<dbReference type="eggNOG" id="ENOG502QRSY">
    <property type="taxonomic scope" value="Eukaryota"/>
</dbReference>
<dbReference type="HOGENOM" id="CLU_034992_2_0_1"/>
<dbReference type="UniPathway" id="UPA00372">
    <property type="reaction ID" value="UER00548"/>
</dbReference>
<dbReference type="ExpressionAtlas" id="A5AEM3">
    <property type="expression patterns" value="baseline and differential"/>
</dbReference>
<dbReference type="GO" id="GO:0005737">
    <property type="term" value="C:cytoplasm"/>
    <property type="evidence" value="ECO:0007669"/>
    <property type="project" value="UniProtKB-SubCell"/>
</dbReference>
<dbReference type="GO" id="GO:0050350">
    <property type="term" value="F:trihydroxystilbene synthase activity"/>
    <property type="evidence" value="ECO:0007669"/>
    <property type="project" value="UniProtKB-EC"/>
</dbReference>
<dbReference type="GO" id="GO:0009058">
    <property type="term" value="P:biosynthetic process"/>
    <property type="evidence" value="ECO:0007669"/>
    <property type="project" value="InterPro"/>
</dbReference>
<dbReference type="GO" id="GO:0006952">
    <property type="term" value="P:defense response"/>
    <property type="evidence" value="ECO:0007669"/>
    <property type="project" value="UniProtKB-KW"/>
</dbReference>
<dbReference type="CDD" id="cd00831">
    <property type="entry name" value="CHS_like"/>
    <property type="match status" value="1"/>
</dbReference>
<dbReference type="FunFam" id="3.40.47.10:FF:000014">
    <property type="entry name" value="Chalcone synthase 1"/>
    <property type="match status" value="1"/>
</dbReference>
<dbReference type="FunFam" id="3.40.47.10:FF:000025">
    <property type="entry name" value="Chalcone synthase 2"/>
    <property type="match status" value="1"/>
</dbReference>
<dbReference type="Gene3D" id="3.40.47.10">
    <property type="match status" value="2"/>
</dbReference>
<dbReference type="InterPro" id="IPR012328">
    <property type="entry name" value="Chalcone/stilbene_synt_C"/>
</dbReference>
<dbReference type="InterPro" id="IPR001099">
    <property type="entry name" value="Chalcone/stilbene_synt_N"/>
</dbReference>
<dbReference type="InterPro" id="IPR018088">
    <property type="entry name" value="Chalcone/stilbene_synthase_AS"/>
</dbReference>
<dbReference type="InterPro" id="IPR011141">
    <property type="entry name" value="Polyketide_synthase_type-III"/>
</dbReference>
<dbReference type="InterPro" id="IPR016039">
    <property type="entry name" value="Thiolase-like"/>
</dbReference>
<dbReference type="PANTHER" id="PTHR11877:SF14">
    <property type="entry name" value="CHALCONE SYNTHASE"/>
    <property type="match status" value="1"/>
</dbReference>
<dbReference type="PANTHER" id="PTHR11877">
    <property type="entry name" value="HYDROXYMETHYLGLUTARYL-COA SYNTHASE"/>
    <property type="match status" value="1"/>
</dbReference>
<dbReference type="Pfam" id="PF02797">
    <property type="entry name" value="Chal_sti_synt_C"/>
    <property type="match status" value="1"/>
</dbReference>
<dbReference type="Pfam" id="PF00195">
    <property type="entry name" value="Chal_sti_synt_N"/>
    <property type="match status" value="1"/>
</dbReference>
<dbReference type="PIRSF" id="PIRSF000451">
    <property type="entry name" value="PKS_III"/>
    <property type="match status" value="1"/>
</dbReference>
<dbReference type="SUPFAM" id="SSF53901">
    <property type="entry name" value="Thiolase-like"/>
    <property type="match status" value="2"/>
</dbReference>
<dbReference type="PROSITE" id="PS00441">
    <property type="entry name" value="CHALCONE_SYNTH"/>
    <property type="match status" value="1"/>
</dbReference>
<evidence type="ECO:0000250" key="1"/>
<evidence type="ECO:0000255" key="2">
    <source>
        <dbReference type="PROSITE-ProRule" id="PRU10023"/>
    </source>
</evidence>
<evidence type="ECO:0000305" key="3"/>
<accession>A5AEM3</accession>
<name>THS4_VITVI</name>
<sequence length="392" mass="42625">MASVEEIRNAQRAKGPATVLAIGTATPDNCLYQSDFADYYFRVTKSEHMTELKKKFNRICDKSMIKKRYIHLTEEMLEEHPNIGAYMAPSLNIRQEIITAEVPKLGKEAALKALKEWGQPKSKITHLVFCTTSGVEMPGADYKLANLLGLEPSVRRVMLYHQGCYAGGTVLRTAKDLAENNAGARVLVVCSEITVVTFRGPSEDALDSLVGQALFGDGSAAVIVGSDPDISIERPLFQLVSAAQTFIPNSAGAIAGNLREVGLTFHLWPNVPTLISENIENCLTKAFDPIGISDWNSLFWIAHPGGPAILDAVEAKVGLDKQKLKATRHILSEYGNMSSACVLFILDEMRKKSLKEGKTTTGEGLDWGVLFGFGPGLTIETVVLHSVGTDSN</sequence>
<protein>
    <recommendedName>
        <fullName>Stilbene synthase 4</fullName>
        <ecNumber>2.3.1.95</ecNumber>
    </recommendedName>
    <alternativeName>
        <fullName>Resveratrol synthase 4</fullName>
    </alternativeName>
    <alternativeName>
        <fullName>Trihydroxystilbene synthase 4</fullName>
        <shortName>StSy 4</shortName>
    </alternativeName>
</protein>
<gene>
    <name type="ORF">GSVIVT00005194001</name>
    <name type="ORF">LOC100241891</name>
    <name type="ORF">VITISV_031376</name>
</gene>
<comment type="function">
    <text evidence="1">Mediates resistance to pathogens which are sensitive to stilbenes.</text>
</comment>
<comment type="catalytic activity">
    <reaction>
        <text>4-coumaroyl-CoA + 3 malonyl-CoA + 3 H(+) = trans-resveratrol + 4 CO2 + 4 CoA</text>
        <dbReference type="Rhea" id="RHEA:11936"/>
        <dbReference type="ChEBI" id="CHEBI:15378"/>
        <dbReference type="ChEBI" id="CHEBI:16526"/>
        <dbReference type="ChEBI" id="CHEBI:45713"/>
        <dbReference type="ChEBI" id="CHEBI:57287"/>
        <dbReference type="ChEBI" id="CHEBI:57355"/>
        <dbReference type="ChEBI" id="CHEBI:57384"/>
        <dbReference type="EC" id="2.3.1.95"/>
    </reaction>
</comment>
<comment type="pathway">
    <text>Phytoalexin biosynthesis; 3,4',5-trihydroxystilbene biosynthesis; 3,4',5-trihydroxystilbene from trans-4-coumarate: step 2/2.</text>
</comment>
<comment type="subunit">
    <text evidence="1">Homodimer.</text>
</comment>
<comment type="subcellular location">
    <subcellularLocation>
        <location evidence="1">Cytoplasm</location>
    </subcellularLocation>
</comment>
<comment type="similarity">
    <text evidence="3">Belongs to the thiolase-like superfamily. Chalcone/stilbene synthases family.</text>
</comment>
<proteinExistence type="inferred from homology"/>